<protein>
    <recommendedName>
        <fullName evidence="1">Putative regulatory protein LBJ_1616</fullName>
    </recommendedName>
</protein>
<name>Y1616_LEPBJ</name>
<reference key="1">
    <citation type="journal article" date="2006" name="Proc. Natl. Acad. Sci. U.S.A.">
        <title>Genome reduction in Leptospira borgpetersenii reflects limited transmission potential.</title>
        <authorList>
            <person name="Bulach D.M."/>
            <person name="Zuerner R.L."/>
            <person name="Wilson P."/>
            <person name="Seemann T."/>
            <person name="McGrath A."/>
            <person name="Cullen P.A."/>
            <person name="Davis J."/>
            <person name="Johnson M."/>
            <person name="Kuczek E."/>
            <person name="Alt D.P."/>
            <person name="Peterson-Burch B."/>
            <person name="Coppel R.L."/>
            <person name="Rood J.I."/>
            <person name="Davies J.K."/>
            <person name="Adler B."/>
        </authorList>
    </citation>
    <scope>NUCLEOTIDE SEQUENCE [LARGE SCALE GENOMIC DNA]</scope>
    <source>
        <strain>JB197</strain>
    </source>
</reference>
<proteinExistence type="inferred from homology"/>
<accession>Q04SE4</accession>
<feature type="chain" id="PRO_0000294256" description="Putative regulatory protein LBJ_1616">
    <location>
        <begin position="1"/>
        <end position="93"/>
    </location>
</feature>
<comment type="similarity">
    <text evidence="1">Belongs to the RemA family.</text>
</comment>
<gene>
    <name type="ordered locus">LBJ_1616</name>
</gene>
<dbReference type="EMBL" id="CP000350">
    <property type="protein sequence ID" value="ABJ76176.1"/>
    <property type="molecule type" value="Genomic_DNA"/>
</dbReference>
<dbReference type="RefSeq" id="WP_002727460.1">
    <property type="nucleotide sequence ID" value="NC_008510.1"/>
</dbReference>
<dbReference type="SMR" id="Q04SE4"/>
<dbReference type="KEGG" id="lbj:LBJ_1616"/>
<dbReference type="HOGENOM" id="CLU_165326_0_0_12"/>
<dbReference type="Proteomes" id="UP000000656">
    <property type="component" value="Chromosome 1"/>
</dbReference>
<dbReference type="HAMAP" id="MF_01503">
    <property type="entry name" value="RemA"/>
    <property type="match status" value="1"/>
</dbReference>
<dbReference type="InterPro" id="IPR007169">
    <property type="entry name" value="RemA-like"/>
</dbReference>
<dbReference type="NCBIfam" id="NF003315">
    <property type="entry name" value="PRK04323.1"/>
    <property type="match status" value="1"/>
</dbReference>
<dbReference type="PANTHER" id="PTHR38449:SF1">
    <property type="entry name" value="REGULATORY PROTEIN SSL2874-RELATED"/>
    <property type="match status" value="1"/>
</dbReference>
<dbReference type="PANTHER" id="PTHR38449">
    <property type="entry name" value="REGULATORY PROTEIN TM_1690-RELATED"/>
    <property type="match status" value="1"/>
</dbReference>
<dbReference type="Pfam" id="PF04025">
    <property type="entry name" value="RemA-like"/>
    <property type="match status" value="1"/>
</dbReference>
<evidence type="ECO:0000255" key="1">
    <source>
        <dbReference type="HAMAP-Rule" id="MF_01503"/>
    </source>
</evidence>
<sequence>MSQFSVLNVGFGNIVLVSKIVSIIHSDSASAKRIRNEAKSNNSLIDATQGKKTRSIIVTDSNHLILSNLRVESLAKRIESSDNSIASEEEDLD</sequence>
<organism>
    <name type="scientific">Leptospira borgpetersenii serovar Hardjo-bovis (strain JB197)</name>
    <dbReference type="NCBI Taxonomy" id="355277"/>
    <lineage>
        <taxon>Bacteria</taxon>
        <taxon>Pseudomonadati</taxon>
        <taxon>Spirochaetota</taxon>
        <taxon>Spirochaetia</taxon>
        <taxon>Leptospirales</taxon>
        <taxon>Leptospiraceae</taxon>
        <taxon>Leptospira</taxon>
    </lineage>
</organism>